<comment type="function">
    <text evidence="1 5 7 9 12">Exhibits GTPase activity (By similarity). Component of the plastid division machinery that forms a contractile ring at the division site (PubMed:25731613). Contributes to plastid division in the vegetative shoot apex, at the shoot apical meristem (SAM) where the proplastid-to-chloroplast transition takes place (PubMed:29920253).</text>
</comment>
<comment type="subunit">
    <text evidence="5 7 8 10 11">Aggregates to form a contractile ring-like structure; contraction of the ring was accompanied by an increase in the filament turnover rate (PubMed:27322658). Self-interacts and binds to FTSZ1 in heteropolymers to form two morphologically distinct types of filaments, termed type-I (smooth filaments) and -II (rough filaments), in a GTP-dependent manner (PubMed:27322658). Part of a complex made of ARC3, ARC6, FTSZ1 and FTSZ2 (PubMed:22823492). Interacts (via C-terminus) with ARC6. Interacts with CDP1/PARC6 (PubMed:28984364). Binds to PGK1 (PubMed:22823492).</text>
</comment>
<comment type="interaction">
    <interactant intactId="EBI-2430270">
        <id>Q9LXJ0</id>
    </interactant>
    <interactant intactId="EBI-2131124">
        <id>Q42545</id>
        <label>FTSZ1</label>
    </interactant>
    <organismsDiffer>false</organismsDiffer>
    <experiments>6</experiments>
</comment>
<comment type="interaction">
    <interactant intactId="EBI-2430270">
        <id>Q9LXJ0</id>
    </interactant>
    <interactant intactId="EBI-2430270">
        <id>Q9LXJ0</id>
        <label>FTSZ2-2</label>
    </interactant>
    <organismsDiffer>false</organismsDiffer>
    <experiments>4</experiments>
</comment>
<comment type="subcellular location">
    <subcellularLocation>
        <location evidence="6 8">Plastid</location>
        <location evidence="6 8">Chloroplast stroma</location>
    </subcellularLocation>
    <subcellularLocation>
        <location evidence="6">Plastid</location>
        <location evidence="6">Chloroplast thylakoid membrane</location>
        <topology>Peripheral membrane protein</topology>
    </subcellularLocation>
    <text evidence="8 9">Forms a contractile ring at the chloroplast midpoint (PubMed:22823492, PubMed:25731613). Exhibits a dynamic trunover in FtsZ ring facilitated by ARC3-mediated destabilization (PubMed:25731613).</text>
</comment>
<comment type="PTM">
    <text evidence="8">Phosphorylation at Thr-282 is required for the formation of contractile ring at the chloroplast midpoint.</text>
</comment>
<comment type="disruption phenotype">
    <text evidence="5 7 9 12">Slightly reduced number of large chloroplasts due to impaired plastid division (PubMed:25731613). Stronger effects on pastid division in the shoot apex, where the proplastid-to-chloroplast transition takes place, than in mature leaves (PubMed:29920253). Increased plastid volume in the shoot apical meristem (SAM), including the central zone as well as peripheral zone of L1, the outermost layer, and the peripheral zone of L3 (PubMed:29920253).</text>
</comment>
<comment type="similarity">
    <text evidence="14">Belongs to the FtsZ family.</text>
</comment>
<feature type="transit peptide" description="Chloroplast" evidence="3">
    <location>
        <begin position="1"/>
        <end status="unknown"/>
    </location>
</feature>
<feature type="chain" id="PRO_0000406891" description="Cell division protein FtsZ homolog 2-2, chloroplastic">
    <location>
        <begin status="unknown"/>
        <end position="473"/>
    </location>
</feature>
<feature type="region of interest" description="Disordered" evidence="4">
    <location>
        <begin position="424"/>
        <end position="455"/>
    </location>
</feature>
<feature type="compositionally biased region" description="Polar residues" evidence="4">
    <location>
        <begin position="445"/>
        <end position="454"/>
    </location>
</feature>
<feature type="binding site" evidence="2">
    <location>
        <begin position="124"/>
        <end position="128"/>
    </location>
    <ligand>
        <name>GTP</name>
        <dbReference type="ChEBI" id="CHEBI:37565"/>
    </ligand>
</feature>
<feature type="binding site" evidence="2">
    <location>
        <begin position="213"/>
        <end position="215"/>
    </location>
    <ligand>
        <name>GTP</name>
        <dbReference type="ChEBI" id="CHEBI:37565"/>
    </ligand>
</feature>
<feature type="binding site" evidence="2">
    <location>
        <position position="244"/>
    </location>
    <ligand>
        <name>GTP</name>
        <dbReference type="ChEBI" id="CHEBI:37565"/>
    </ligand>
</feature>
<feature type="binding site" evidence="2">
    <location>
        <position position="248"/>
    </location>
    <ligand>
        <name>GTP</name>
        <dbReference type="ChEBI" id="CHEBI:37565"/>
    </ligand>
</feature>
<feature type="binding site" evidence="2">
    <location>
        <position position="292"/>
    </location>
    <ligand>
        <name>GTP</name>
        <dbReference type="ChEBI" id="CHEBI:37565"/>
    </ligand>
</feature>
<feature type="modified residue" description="Phosphothreonine; by PGK1" evidence="8">
    <location>
        <position position="282"/>
    </location>
</feature>
<feature type="mutagenesis site" description="Normal interaction with FtsZ proteins and with ARC6. Lost ability to form contractile ring at the chloroplast midpoint." evidence="8">
    <original>T</original>
    <variation>V</variation>
    <location>
        <position position="282"/>
    </location>
</feature>
<feature type="sequence conflict" description="In Ref. 6; AAL07180." evidence="14" ref="6">
    <original>I</original>
    <variation>N</variation>
    <location>
        <position position="269"/>
    </location>
</feature>
<dbReference type="EMBL" id="AF384167">
    <property type="protein sequence ID" value="AAK63846.1"/>
    <property type="molecule type" value="mRNA"/>
</dbReference>
<dbReference type="EMBL" id="AL353912">
    <property type="protein sequence ID" value="CAB89236.1"/>
    <property type="molecule type" value="Genomic_DNA"/>
</dbReference>
<dbReference type="EMBL" id="CP002686">
    <property type="protein sequence ID" value="AEE78989.1"/>
    <property type="molecule type" value="Genomic_DNA"/>
</dbReference>
<dbReference type="EMBL" id="CP002686">
    <property type="protein sequence ID" value="ANM65557.1"/>
    <property type="molecule type" value="Genomic_DNA"/>
</dbReference>
<dbReference type="EMBL" id="CP002686">
    <property type="protein sequence ID" value="ANM65558.1"/>
    <property type="molecule type" value="Genomic_DNA"/>
</dbReference>
<dbReference type="EMBL" id="AY056331">
    <property type="protein sequence ID" value="AAL07180.1"/>
    <property type="molecule type" value="mRNA"/>
</dbReference>
<dbReference type="EMBL" id="AY150504">
    <property type="protein sequence ID" value="AAN13020.1"/>
    <property type="molecule type" value="mRNA"/>
</dbReference>
<dbReference type="PIR" id="T49028">
    <property type="entry name" value="T49028"/>
</dbReference>
<dbReference type="RefSeq" id="NP_001327516.1">
    <property type="nucleotide sequence ID" value="NM_001339587.1"/>
</dbReference>
<dbReference type="RefSeq" id="NP_001327517.1">
    <property type="nucleotide sequence ID" value="NM_001339586.1"/>
</dbReference>
<dbReference type="RefSeq" id="NP_190843.1">
    <property type="nucleotide sequence ID" value="NM_115135.3"/>
</dbReference>
<dbReference type="SMR" id="Q9LXJ0"/>
<dbReference type="BioGRID" id="9758">
    <property type="interactions" value="5"/>
</dbReference>
<dbReference type="FunCoup" id="Q9LXJ0">
    <property type="interactions" value="747"/>
</dbReference>
<dbReference type="IntAct" id="Q9LXJ0">
    <property type="interactions" value="4"/>
</dbReference>
<dbReference type="STRING" id="3702.Q9LXJ0"/>
<dbReference type="iPTMnet" id="Q9LXJ0"/>
<dbReference type="PaxDb" id="3702-AT3G52750.1"/>
<dbReference type="ProteomicsDB" id="228958"/>
<dbReference type="EnsemblPlants" id="AT3G52750.1">
    <property type="protein sequence ID" value="AT3G52750.1"/>
    <property type="gene ID" value="AT3G52750"/>
</dbReference>
<dbReference type="EnsemblPlants" id="AT3G52750.2">
    <property type="protein sequence ID" value="AT3G52750.2"/>
    <property type="gene ID" value="AT3G52750"/>
</dbReference>
<dbReference type="EnsemblPlants" id="AT3G52750.3">
    <property type="protein sequence ID" value="AT3G52750.3"/>
    <property type="gene ID" value="AT3G52750"/>
</dbReference>
<dbReference type="GeneID" id="824441"/>
<dbReference type="Gramene" id="AT3G52750.1">
    <property type="protein sequence ID" value="AT3G52750.1"/>
    <property type="gene ID" value="AT3G52750"/>
</dbReference>
<dbReference type="Gramene" id="AT3G52750.2">
    <property type="protein sequence ID" value="AT3G52750.2"/>
    <property type="gene ID" value="AT3G52750"/>
</dbReference>
<dbReference type="Gramene" id="AT3G52750.3">
    <property type="protein sequence ID" value="AT3G52750.3"/>
    <property type="gene ID" value="AT3G52750"/>
</dbReference>
<dbReference type="KEGG" id="ath:AT3G52750"/>
<dbReference type="Araport" id="AT3G52750"/>
<dbReference type="TAIR" id="AT3G52750">
    <property type="gene designation" value="FTSZ2-2"/>
</dbReference>
<dbReference type="eggNOG" id="ENOG502QRFN">
    <property type="taxonomic scope" value="Eukaryota"/>
</dbReference>
<dbReference type="HOGENOM" id="CLU_024865_3_0_1"/>
<dbReference type="InParanoid" id="Q9LXJ0"/>
<dbReference type="OMA" id="FAIMDYL"/>
<dbReference type="PhylomeDB" id="Q9LXJ0"/>
<dbReference type="PRO" id="PR:Q9LXJ0"/>
<dbReference type="Proteomes" id="UP000006548">
    <property type="component" value="Chromosome 3"/>
</dbReference>
<dbReference type="ExpressionAtlas" id="Q9LXJ0">
    <property type="expression patterns" value="baseline and differential"/>
</dbReference>
<dbReference type="GO" id="GO:0009507">
    <property type="term" value="C:chloroplast"/>
    <property type="evidence" value="ECO:0000314"/>
    <property type="project" value="UniProtKB"/>
</dbReference>
<dbReference type="GO" id="GO:0009570">
    <property type="term" value="C:chloroplast stroma"/>
    <property type="evidence" value="ECO:0000314"/>
    <property type="project" value="TAIR"/>
</dbReference>
<dbReference type="GO" id="GO:0009534">
    <property type="term" value="C:chloroplast thylakoid"/>
    <property type="evidence" value="ECO:0007005"/>
    <property type="project" value="TAIR"/>
</dbReference>
<dbReference type="GO" id="GO:0009535">
    <property type="term" value="C:chloroplast thylakoid membrane"/>
    <property type="evidence" value="ECO:0007669"/>
    <property type="project" value="UniProtKB-SubCell"/>
</dbReference>
<dbReference type="GO" id="GO:0070938">
    <property type="term" value="C:contractile ring"/>
    <property type="evidence" value="ECO:0000314"/>
    <property type="project" value="UniProtKB"/>
</dbReference>
<dbReference type="GO" id="GO:0005829">
    <property type="term" value="C:cytosol"/>
    <property type="evidence" value="ECO:0007005"/>
    <property type="project" value="TAIR"/>
</dbReference>
<dbReference type="GO" id="GO:0009532">
    <property type="term" value="C:plastid stroma"/>
    <property type="evidence" value="ECO:0000314"/>
    <property type="project" value="TAIR"/>
</dbReference>
<dbReference type="GO" id="GO:0042651">
    <property type="term" value="C:thylakoid membrane"/>
    <property type="evidence" value="ECO:0000314"/>
    <property type="project" value="TAIR"/>
</dbReference>
<dbReference type="GO" id="GO:0005525">
    <property type="term" value="F:GTP binding"/>
    <property type="evidence" value="ECO:0000250"/>
    <property type="project" value="UniProtKB"/>
</dbReference>
<dbReference type="GO" id="GO:0003924">
    <property type="term" value="F:GTPase activity"/>
    <property type="evidence" value="ECO:0000250"/>
    <property type="project" value="UniProtKB"/>
</dbReference>
<dbReference type="GO" id="GO:0042802">
    <property type="term" value="F:identical protein binding"/>
    <property type="evidence" value="ECO:0000353"/>
    <property type="project" value="IntAct"/>
</dbReference>
<dbReference type="GO" id="GO:0042803">
    <property type="term" value="F:protein homodimerization activity"/>
    <property type="evidence" value="ECO:0000250"/>
    <property type="project" value="UniProtKB"/>
</dbReference>
<dbReference type="GO" id="GO:0010020">
    <property type="term" value="P:chloroplast fission"/>
    <property type="evidence" value="ECO:0000315"/>
    <property type="project" value="UniProtKB"/>
</dbReference>
<dbReference type="GO" id="GO:0009658">
    <property type="term" value="P:chloroplast organization"/>
    <property type="evidence" value="ECO:0000315"/>
    <property type="project" value="TAIR"/>
</dbReference>
<dbReference type="CDD" id="cd02201">
    <property type="entry name" value="FtsZ_type1"/>
    <property type="match status" value="1"/>
</dbReference>
<dbReference type="FunFam" id="3.40.50.1440:FF:000001">
    <property type="entry name" value="Cell division protein FtsZ"/>
    <property type="match status" value="1"/>
</dbReference>
<dbReference type="FunFam" id="3.30.1330.20:FF:000007">
    <property type="entry name" value="Cell division protein ftsZ, putative"/>
    <property type="match status" value="1"/>
</dbReference>
<dbReference type="Gene3D" id="3.30.1330.20">
    <property type="entry name" value="Tubulin/FtsZ, C-terminal domain"/>
    <property type="match status" value="1"/>
</dbReference>
<dbReference type="Gene3D" id="3.40.50.1440">
    <property type="entry name" value="Tubulin/FtsZ, GTPase domain"/>
    <property type="match status" value="1"/>
</dbReference>
<dbReference type="HAMAP" id="MF_00909">
    <property type="entry name" value="FtsZ"/>
    <property type="match status" value="1"/>
</dbReference>
<dbReference type="InterPro" id="IPR000158">
    <property type="entry name" value="Cell_div_FtsZ"/>
</dbReference>
<dbReference type="InterPro" id="IPR020805">
    <property type="entry name" value="Cell_div_FtsZ_CS"/>
</dbReference>
<dbReference type="InterPro" id="IPR045061">
    <property type="entry name" value="FtsZ/CetZ"/>
</dbReference>
<dbReference type="InterPro" id="IPR024757">
    <property type="entry name" value="FtsZ_C"/>
</dbReference>
<dbReference type="InterPro" id="IPR008280">
    <property type="entry name" value="Tub_FtsZ_C"/>
</dbReference>
<dbReference type="InterPro" id="IPR037103">
    <property type="entry name" value="Tubulin/FtsZ-like_C"/>
</dbReference>
<dbReference type="InterPro" id="IPR018316">
    <property type="entry name" value="Tubulin/FtsZ_2-layer-sand-dom"/>
</dbReference>
<dbReference type="InterPro" id="IPR036525">
    <property type="entry name" value="Tubulin/FtsZ_GTPase_sf"/>
</dbReference>
<dbReference type="InterPro" id="IPR003008">
    <property type="entry name" value="Tubulin_FtsZ_GTPase"/>
</dbReference>
<dbReference type="NCBIfam" id="TIGR00065">
    <property type="entry name" value="ftsZ"/>
    <property type="match status" value="1"/>
</dbReference>
<dbReference type="PANTHER" id="PTHR30314">
    <property type="entry name" value="CELL DIVISION PROTEIN FTSZ-RELATED"/>
    <property type="match status" value="1"/>
</dbReference>
<dbReference type="PANTHER" id="PTHR30314:SF3">
    <property type="entry name" value="MITOCHONDRIAL DIVISION PROTEIN FSZA"/>
    <property type="match status" value="1"/>
</dbReference>
<dbReference type="Pfam" id="PF12327">
    <property type="entry name" value="FtsZ_C"/>
    <property type="match status" value="1"/>
</dbReference>
<dbReference type="Pfam" id="PF00091">
    <property type="entry name" value="Tubulin"/>
    <property type="match status" value="1"/>
</dbReference>
<dbReference type="PRINTS" id="PR00423">
    <property type="entry name" value="CELLDVISFTSZ"/>
</dbReference>
<dbReference type="SMART" id="SM00864">
    <property type="entry name" value="Tubulin"/>
    <property type="match status" value="1"/>
</dbReference>
<dbReference type="SMART" id="SM00865">
    <property type="entry name" value="Tubulin_C"/>
    <property type="match status" value="1"/>
</dbReference>
<dbReference type="SUPFAM" id="SSF55307">
    <property type="entry name" value="Tubulin C-terminal domain-like"/>
    <property type="match status" value="1"/>
</dbReference>
<dbReference type="SUPFAM" id="SSF52490">
    <property type="entry name" value="Tubulin nucleotide-binding domain-like"/>
    <property type="match status" value="1"/>
</dbReference>
<dbReference type="PROSITE" id="PS01135">
    <property type="entry name" value="FTSZ_2"/>
    <property type="match status" value="1"/>
</dbReference>
<protein>
    <recommendedName>
        <fullName evidence="13">Cell division protein FtsZ homolog 2-2, chloroplastic</fullName>
        <shortName evidence="13">AtFtsZ2-2</shortName>
    </recommendedName>
    <alternativeName>
        <fullName evidence="13">Plastid division protein FTSZ2-2</fullName>
    </alternativeName>
</protein>
<name>FTZ22_ARATH</name>
<gene>
    <name evidence="13" type="primary">FTSZ2-2</name>
    <name evidence="15" type="ordered locus">At3g52750</name>
    <name evidence="16" type="ORF">F3C22.150</name>
</gene>
<keyword id="KW-0150">Chloroplast</keyword>
<keyword id="KW-0342">GTP-binding</keyword>
<keyword id="KW-0472">Membrane</keyword>
<keyword id="KW-0547">Nucleotide-binding</keyword>
<keyword id="KW-0597">Phosphoprotein</keyword>
<keyword id="KW-0934">Plastid</keyword>
<keyword id="KW-1185">Reference proteome</keyword>
<keyword id="KW-0793">Thylakoid</keyword>
<keyword id="KW-0809">Transit peptide</keyword>
<organism>
    <name type="scientific">Arabidopsis thaliana</name>
    <name type="common">Mouse-ear cress</name>
    <dbReference type="NCBI Taxonomy" id="3702"/>
    <lineage>
        <taxon>Eukaryota</taxon>
        <taxon>Viridiplantae</taxon>
        <taxon>Streptophyta</taxon>
        <taxon>Embryophyta</taxon>
        <taxon>Tracheophyta</taxon>
        <taxon>Spermatophyta</taxon>
        <taxon>Magnoliopsida</taxon>
        <taxon>eudicotyledons</taxon>
        <taxon>Gunneridae</taxon>
        <taxon>Pentapetalae</taxon>
        <taxon>rosids</taxon>
        <taxon>malvids</taxon>
        <taxon>Brassicales</taxon>
        <taxon>Brassicaceae</taxon>
        <taxon>Camelineae</taxon>
        <taxon>Arabidopsis</taxon>
    </lineage>
</organism>
<sequence>MAAYVSPCLTPPDSRVLTVLRKSVLPDHHLGTRVGCLRMSEGTTKRYRVVASHKYESSSIRNSLNSHSTSHFQSQDSFLNLHPEISMLNPRKETSSVPITEDLDELSTPNTYNEARIKVIGVGGGGSNAVNRMIESEMIGVEFWIVNTDIQAMRISPVFPDNRLQIGKELTRGLGAGGNPEIGMNAATESKEAIQEALYGSDMVFVTAGMGGGTGTGGAPIIAGVAKAMGILTVGIVTTPFSFEGRRRALQAQEGIAALRDNVDTLIVIPNDKLLAAVSQSTPVTEAFNLADDILRQGVRGISDIITIPGLVNVDFADVRAIMANAGSSLMGIGTATGKTRARDAALNAIQSPLLDIGIERATGIVWNITGGSDLTLFEVNAAAEVIYDLVDPTANLIFGAVVDPSYSGQISITLIATGFKRQEEGEGRPLQATQADASMGATRRPSSSFTEGSSIEIPEFLKKKGRSRYPRL</sequence>
<reference key="1">
    <citation type="journal article" date="2001" name="Biochem. Biophys. Res. Commun.">
        <title>Chloroplast targeting of chloroplast division FtsZ2 proteins in Arabidopsis.</title>
        <authorList>
            <person name="Fujiwara M."/>
            <person name="Yoshida S."/>
        </authorList>
    </citation>
    <scope>NUCLEOTIDE SEQUENCE [MRNA]</scope>
    <scope>SUBCELLULAR LOCATION</scope>
    <source>
        <strain>cv. Columbia</strain>
        <tissue>Shoot</tissue>
    </source>
</reference>
<reference key="2">
    <citation type="journal article" date="2001" name="Plant Physiol.">
        <title>Colocalization of plastid division proteins in the chloroplast stromal compartment establishes a new functional relationship between FtsZ1 and FtsZ2 in higher plants.</title>
        <authorList>
            <person name="McAndrew R.S."/>
            <person name="Froehlich J.E."/>
            <person name="Vitha S."/>
            <person name="Stokes K.D."/>
            <person name="Osteryoung K.W."/>
        </authorList>
    </citation>
    <scope>NUCLEOTIDE SEQUENCE [MRNA]</scope>
    <scope>SUBCELLULAR LOCATION</scope>
    <source>
        <strain>cv. Columbia</strain>
    </source>
</reference>
<reference key="3">
    <citation type="submission" date="2001-05" db="EMBL/GenBank/DDBJ databases">
        <title>FtsZ2 family member AtFtsZ2-2.</title>
        <authorList>
            <person name="Stokes K.D."/>
            <person name="Osteryoung K.W."/>
        </authorList>
    </citation>
    <scope>NUCLEOTIDE SEQUENCE [MRNA]</scope>
    <source>
        <strain>cv. Columbia</strain>
    </source>
</reference>
<reference key="4">
    <citation type="journal article" date="2000" name="Nature">
        <title>Sequence and analysis of chromosome 3 of the plant Arabidopsis thaliana.</title>
        <authorList>
            <person name="Salanoubat M."/>
            <person name="Lemcke K."/>
            <person name="Rieger M."/>
            <person name="Ansorge W."/>
            <person name="Unseld M."/>
            <person name="Fartmann B."/>
            <person name="Valle G."/>
            <person name="Bloecker H."/>
            <person name="Perez-Alonso M."/>
            <person name="Obermaier B."/>
            <person name="Delseny M."/>
            <person name="Boutry M."/>
            <person name="Grivell L.A."/>
            <person name="Mache R."/>
            <person name="Puigdomenech P."/>
            <person name="De Simone V."/>
            <person name="Choisne N."/>
            <person name="Artiguenave F."/>
            <person name="Robert C."/>
            <person name="Brottier P."/>
            <person name="Wincker P."/>
            <person name="Cattolico L."/>
            <person name="Weissenbach J."/>
            <person name="Saurin W."/>
            <person name="Quetier F."/>
            <person name="Schaefer M."/>
            <person name="Mueller-Auer S."/>
            <person name="Gabel C."/>
            <person name="Fuchs M."/>
            <person name="Benes V."/>
            <person name="Wurmbach E."/>
            <person name="Drzonek H."/>
            <person name="Erfle H."/>
            <person name="Jordan N."/>
            <person name="Bangert S."/>
            <person name="Wiedelmann R."/>
            <person name="Kranz H."/>
            <person name="Voss H."/>
            <person name="Holland R."/>
            <person name="Brandt P."/>
            <person name="Nyakatura G."/>
            <person name="Vezzi A."/>
            <person name="D'Angelo M."/>
            <person name="Pallavicini A."/>
            <person name="Toppo S."/>
            <person name="Simionati B."/>
            <person name="Conrad A."/>
            <person name="Hornischer K."/>
            <person name="Kauer G."/>
            <person name="Loehnert T.-H."/>
            <person name="Nordsiek G."/>
            <person name="Reichelt J."/>
            <person name="Scharfe M."/>
            <person name="Schoen O."/>
            <person name="Bargues M."/>
            <person name="Terol J."/>
            <person name="Climent J."/>
            <person name="Navarro P."/>
            <person name="Collado C."/>
            <person name="Perez-Perez A."/>
            <person name="Ottenwaelder B."/>
            <person name="Duchemin D."/>
            <person name="Cooke R."/>
            <person name="Laudie M."/>
            <person name="Berger-Llauro C."/>
            <person name="Purnelle B."/>
            <person name="Masuy D."/>
            <person name="de Haan M."/>
            <person name="Maarse A.C."/>
            <person name="Alcaraz J.-P."/>
            <person name="Cottet A."/>
            <person name="Casacuberta E."/>
            <person name="Monfort A."/>
            <person name="Argiriou A."/>
            <person name="Flores M."/>
            <person name="Liguori R."/>
            <person name="Vitale D."/>
            <person name="Mannhaupt G."/>
            <person name="Haase D."/>
            <person name="Schoof H."/>
            <person name="Rudd S."/>
            <person name="Zaccaria P."/>
            <person name="Mewes H.-W."/>
            <person name="Mayer K.F.X."/>
            <person name="Kaul S."/>
            <person name="Town C.D."/>
            <person name="Koo H.L."/>
            <person name="Tallon L.J."/>
            <person name="Jenkins J."/>
            <person name="Rooney T."/>
            <person name="Rizzo M."/>
            <person name="Walts A."/>
            <person name="Utterback T."/>
            <person name="Fujii C.Y."/>
            <person name="Shea T.P."/>
            <person name="Creasy T.H."/>
            <person name="Haas B."/>
            <person name="Maiti R."/>
            <person name="Wu D."/>
            <person name="Peterson J."/>
            <person name="Van Aken S."/>
            <person name="Pai G."/>
            <person name="Militscher J."/>
            <person name="Sellers P."/>
            <person name="Gill J.E."/>
            <person name="Feldblyum T.V."/>
            <person name="Preuss D."/>
            <person name="Lin X."/>
            <person name="Nierman W.C."/>
            <person name="Salzberg S.L."/>
            <person name="White O."/>
            <person name="Venter J.C."/>
            <person name="Fraser C.M."/>
            <person name="Kaneko T."/>
            <person name="Nakamura Y."/>
            <person name="Sato S."/>
            <person name="Kato T."/>
            <person name="Asamizu E."/>
            <person name="Sasamoto S."/>
            <person name="Kimura T."/>
            <person name="Idesawa K."/>
            <person name="Kawashima K."/>
            <person name="Kishida Y."/>
            <person name="Kiyokawa C."/>
            <person name="Kohara M."/>
            <person name="Matsumoto M."/>
            <person name="Matsuno A."/>
            <person name="Muraki A."/>
            <person name="Nakayama S."/>
            <person name="Nakazaki N."/>
            <person name="Shinpo S."/>
            <person name="Takeuchi C."/>
            <person name="Wada T."/>
            <person name="Watanabe A."/>
            <person name="Yamada M."/>
            <person name="Yasuda M."/>
            <person name="Tabata S."/>
        </authorList>
    </citation>
    <scope>NUCLEOTIDE SEQUENCE [LARGE SCALE GENOMIC DNA]</scope>
    <source>
        <strain>cv. Columbia</strain>
    </source>
</reference>
<reference key="5">
    <citation type="journal article" date="2017" name="Plant J.">
        <title>Araport11: a complete reannotation of the Arabidopsis thaliana reference genome.</title>
        <authorList>
            <person name="Cheng C.Y."/>
            <person name="Krishnakumar V."/>
            <person name="Chan A.P."/>
            <person name="Thibaud-Nissen F."/>
            <person name="Schobel S."/>
            <person name="Town C.D."/>
        </authorList>
    </citation>
    <scope>GENOME REANNOTATION</scope>
    <source>
        <strain>cv. Columbia</strain>
    </source>
</reference>
<reference key="6">
    <citation type="journal article" date="2003" name="Science">
        <title>Empirical analysis of transcriptional activity in the Arabidopsis genome.</title>
        <authorList>
            <person name="Yamada K."/>
            <person name="Lim J."/>
            <person name="Dale J.M."/>
            <person name="Chen H."/>
            <person name="Shinn P."/>
            <person name="Palm C.J."/>
            <person name="Southwick A.M."/>
            <person name="Wu H.C."/>
            <person name="Kim C.J."/>
            <person name="Nguyen M."/>
            <person name="Pham P.K."/>
            <person name="Cheuk R.F."/>
            <person name="Karlin-Newmann G."/>
            <person name="Liu S.X."/>
            <person name="Lam B."/>
            <person name="Sakano H."/>
            <person name="Wu T."/>
            <person name="Yu G."/>
            <person name="Miranda M."/>
            <person name="Quach H.L."/>
            <person name="Tripp M."/>
            <person name="Chang C.H."/>
            <person name="Lee J.M."/>
            <person name="Toriumi M.J."/>
            <person name="Chan M.M."/>
            <person name="Tang C.C."/>
            <person name="Onodera C.S."/>
            <person name="Deng J.M."/>
            <person name="Akiyama K."/>
            <person name="Ansari Y."/>
            <person name="Arakawa T."/>
            <person name="Banh J."/>
            <person name="Banno F."/>
            <person name="Bowser L."/>
            <person name="Brooks S.Y."/>
            <person name="Carninci P."/>
            <person name="Chao Q."/>
            <person name="Choy N."/>
            <person name="Enju A."/>
            <person name="Goldsmith A.D."/>
            <person name="Gurjal M."/>
            <person name="Hansen N.F."/>
            <person name="Hayashizaki Y."/>
            <person name="Johnson-Hopson C."/>
            <person name="Hsuan V.W."/>
            <person name="Iida K."/>
            <person name="Karnes M."/>
            <person name="Khan S."/>
            <person name="Koesema E."/>
            <person name="Ishida J."/>
            <person name="Jiang P.X."/>
            <person name="Jones T."/>
            <person name="Kawai J."/>
            <person name="Kamiya A."/>
            <person name="Meyers C."/>
            <person name="Nakajima M."/>
            <person name="Narusaka M."/>
            <person name="Seki M."/>
            <person name="Sakurai T."/>
            <person name="Satou M."/>
            <person name="Tamse R."/>
            <person name="Vaysberg M."/>
            <person name="Wallender E.K."/>
            <person name="Wong C."/>
            <person name="Yamamura Y."/>
            <person name="Yuan S."/>
            <person name="Shinozaki K."/>
            <person name="Davis R.W."/>
            <person name="Theologis A."/>
            <person name="Ecker J.R."/>
        </authorList>
    </citation>
    <scope>NUCLEOTIDE SEQUENCE [LARGE SCALE MRNA]</scope>
    <source>
        <strain>cv. Columbia</strain>
    </source>
</reference>
<reference key="7">
    <citation type="journal article" date="2008" name="Biochem. J.">
        <title>In vivo quantitative relationship between plastid division proteins FtsZ1 and FtsZ2 and identification of ARC6 and ARC3 in a native FtsZ complex.</title>
        <authorList>
            <person name="McAndrew R.S."/>
            <person name="Olson B.J."/>
            <person name="Kadirjan-Kalbach D.K."/>
            <person name="Chi-Ham C.L."/>
            <person name="Vitha S."/>
            <person name="Froehlich J.E."/>
            <person name="Osteryoung K.W."/>
        </authorList>
    </citation>
    <scope>FUNCTION</scope>
    <scope>DISRUPTION PHENOTYPE</scope>
    <scope>SUBUNIT</scope>
    <scope>SUBCELLULAR LOCATION</scope>
    <source>
        <strain>cv. Columbia</strain>
    </source>
</reference>
<reference key="8">
    <citation type="journal article" date="2008" name="PLoS ONE">
        <title>Sorting signals, N-terminal modifications and abundance of the chloroplast proteome.</title>
        <authorList>
            <person name="Zybailov B."/>
            <person name="Rutschow H."/>
            <person name="Friso G."/>
            <person name="Rudella A."/>
            <person name="Emanuelsson O."/>
            <person name="Sun Q."/>
            <person name="van Wijk K.J."/>
        </authorList>
    </citation>
    <scope>IDENTIFICATION BY MASS SPECTROMETRY</scope>
    <scope>SUBCELLULAR LOCATION [LARGE SCALE ANALYSIS]</scope>
</reference>
<reference key="9">
    <citation type="journal article" date="2009" name="Mol. Plant">
        <title>Arabidopsis FtsZ2-1 and FtsZ2-2 are functionally redundant, but FtsZ-based plastid division is not essential for chloroplast partitioning or plant growth and development.</title>
        <authorList>
            <person name="Schmitz A.J."/>
            <person name="Glynn J.M."/>
            <person name="Olson B.J.S.C."/>
            <person name="Stokes K.D."/>
            <person name="Osteryoung K.W."/>
        </authorList>
    </citation>
    <scope>FUNCTION</scope>
    <scope>DISRUPTION PHENOTYPE</scope>
    <scope>INTERACTION WITH ARC6</scope>
</reference>
<reference key="10">
    <citation type="journal article" date="2012" name="Biochem. J.">
        <title>In vivo phosphorylation of FtsZ2 in Arabidopsis thaliana.</title>
        <authorList>
            <person name="Gargano D."/>
            <person name="Maple-Groedem J."/>
            <person name="Moeller S.G."/>
        </authorList>
    </citation>
    <scope>PHOSPHORYLATION AT THR-282</scope>
    <scope>MUTAGENESIS OF THR-282</scope>
    <scope>INTERACTION WITH PGK1; ARC6; FTSZ1-1; FTSZ2-1 AND FTSZ2-2</scope>
    <scope>SUBCELLULAR LOCATION</scope>
</reference>
<reference key="11">
    <citation type="journal article" date="2015" name="Microsc. Microanal.">
        <title>FtsZ1/FtsZ2 turnover in chloroplasts and the role of ARC3.</title>
        <authorList>
            <person name="Johnson C.B."/>
            <person name="Shaik R."/>
            <person name="Abdallah R."/>
            <person name="Vitha S."/>
            <person name="Holzenburg A."/>
        </authorList>
    </citation>
    <scope>FUNCTION</scope>
    <scope>DISRUPTION PHENOTYPE</scope>
    <scope>SUBCELLULAR LOCATION</scope>
    <source>
        <strain>cv. Columbia</strain>
    </source>
</reference>
<reference key="12">
    <citation type="journal article" date="2016" name="Nat. Plants">
        <title>Chloroplast FtsZ assembles into a contractible ring via tubulin-like heteropolymerization.</title>
        <authorList>
            <person name="Yoshida Y."/>
            <person name="Mogi Y."/>
            <person name="TerBush A.D."/>
            <person name="Osteryoung K.W."/>
        </authorList>
    </citation>
    <scope>SUBUNIT</scope>
</reference>
<reference key="13">
    <citation type="journal article" date="2018" name="Dev. Biol.">
        <title>Differential impacts of FtsZ proteins on plastid division in the shoot apex of Arabidopsis.</title>
        <authorList>
            <person name="Swid N."/>
            <person name="Nevo R."/>
            <person name="Kiss V."/>
            <person name="Kapon R."/>
            <person name="Dagan S."/>
            <person name="Snir O."/>
            <person name="Adam Z."/>
            <person name="Falconet D."/>
            <person name="Reich Z."/>
            <person name="Charuvi D."/>
        </authorList>
    </citation>
    <scope>FUNCTION</scope>
    <scope>DISRUPTION PHENOTYPE</scope>
    <source>
        <strain>cv. Columbia</strain>
        <strain>cv. Wassilewskija</strain>
    </source>
</reference>
<reference key="14">
    <citation type="journal article" date="2018" name="Physiol. Plantarum">
        <title>Isolation and analysis of a stromule-overproducing Arabidopsis mutant suggest the role of PARC6 in plastid morphology maintenance in the leaf epidermis.</title>
        <authorList>
            <person name="Itoh R.D."/>
            <person name="Ishikawa H."/>
            <person name="Nakajima K.P."/>
            <person name="Moriyama S."/>
            <person name="Fujiwara M.T."/>
        </authorList>
    </citation>
    <scope>INTERACTION WITH CDP1/PARC6</scope>
    <source>
        <strain>cv. Columbia</strain>
    </source>
</reference>
<accession>Q9LXJ0</accession>
<accession>Q93ZQ7</accession>
<proteinExistence type="evidence at protein level"/>
<evidence type="ECO:0000250" key="1"/>
<evidence type="ECO:0000250" key="2">
    <source>
        <dbReference type="UniProtKB" id="P0A029"/>
    </source>
</evidence>
<evidence type="ECO:0000255" key="3"/>
<evidence type="ECO:0000256" key="4">
    <source>
        <dbReference type="SAM" id="MobiDB-lite"/>
    </source>
</evidence>
<evidence type="ECO:0000269" key="5">
    <source>
    </source>
</evidence>
<evidence type="ECO:0000269" key="6">
    <source>
    </source>
</evidence>
<evidence type="ECO:0000269" key="7">
    <source>
    </source>
</evidence>
<evidence type="ECO:0000269" key="8">
    <source>
    </source>
</evidence>
<evidence type="ECO:0000269" key="9">
    <source>
    </source>
</evidence>
<evidence type="ECO:0000269" key="10">
    <source>
    </source>
</evidence>
<evidence type="ECO:0000269" key="11">
    <source>
    </source>
</evidence>
<evidence type="ECO:0000269" key="12">
    <source>
    </source>
</evidence>
<evidence type="ECO:0000303" key="13">
    <source>
    </source>
</evidence>
<evidence type="ECO:0000305" key="14"/>
<evidence type="ECO:0000312" key="15">
    <source>
        <dbReference type="Araport" id="AT3G52750"/>
    </source>
</evidence>
<evidence type="ECO:0000312" key="16">
    <source>
        <dbReference type="EMBL" id="CAB89236.1"/>
    </source>
</evidence>